<accession>Q6CXW4</accession>
<keyword id="KW-0010">Activator</keyword>
<keyword id="KW-0012">Acyltransferase</keyword>
<keyword id="KW-0103">Bromodomain</keyword>
<keyword id="KW-0156">Chromatin regulator</keyword>
<keyword id="KW-0539">Nucleus</keyword>
<keyword id="KW-1185">Reference proteome</keyword>
<keyword id="KW-0804">Transcription</keyword>
<keyword id="KW-0805">Transcription regulation</keyword>
<keyword id="KW-0808">Transferase</keyword>
<reference key="1">
    <citation type="journal article" date="2004" name="Nature">
        <title>Genome evolution in yeasts.</title>
        <authorList>
            <person name="Dujon B."/>
            <person name="Sherman D."/>
            <person name="Fischer G."/>
            <person name="Durrens P."/>
            <person name="Casaregola S."/>
            <person name="Lafontaine I."/>
            <person name="de Montigny J."/>
            <person name="Marck C."/>
            <person name="Neuveglise C."/>
            <person name="Talla E."/>
            <person name="Goffard N."/>
            <person name="Frangeul L."/>
            <person name="Aigle M."/>
            <person name="Anthouard V."/>
            <person name="Babour A."/>
            <person name="Barbe V."/>
            <person name="Barnay S."/>
            <person name="Blanchin S."/>
            <person name="Beckerich J.-M."/>
            <person name="Beyne E."/>
            <person name="Bleykasten C."/>
            <person name="Boisrame A."/>
            <person name="Boyer J."/>
            <person name="Cattolico L."/>
            <person name="Confanioleri F."/>
            <person name="de Daruvar A."/>
            <person name="Despons L."/>
            <person name="Fabre E."/>
            <person name="Fairhead C."/>
            <person name="Ferry-Dumazet H."/>
            <person name="Groppi A."/>
            <person name="Hantraye F."/>
            <person name="Hennequin C."/>
            <person name="Jauniaux N."/>
            <person name="Joyet P."/>
            <person name="Kachouri R."/>
            <person name="Kerrest A."/>
            <person name="Koszul R."/>
            <person name="Lemaire M."/>
            <person name="Lesur I."/>
            <person name="Ma L."/>
            <person name="Muller H."/>
            <person name="Nicaud J.-M."/>
            <person name="Nikolski M."/>
            <person name="Oztas S."/>
            <person name="Ozier-Kalogeropoulos O."/>
            <person name="Pellenz S."/>
            <person name="Potier S."/>
            <person name="Richard G.-F."/>
            <person name="Straub M.-L."/>
            <person name="Suleau A."/>
            <person name="Swennen D."/>
            <person name="Tekaia F."/>
            <person name="Wesolowski-Louvel M."/>
            <person name="Westhof E."/>
            <person name="Wirth B."/>
            <person name="Zeniou-Meyer M."/>
            <person name="Zivanovic Y."/>
            <person name="Bolotin-Fukuhara M."/>
            <person name="Thierry A."/>
            <person name="Bouchier C."/>
            <person name="Caudron B."/>
            <person name="Scarpelli C."/>
            <person name="Gaillardin C."/>
            <person name="Weissenbach J."/>
            <person name="Wincker P."/>
            <person name="Souciet J.-L."/>
        </authorList>
    </citation>
    <scope>NUCLEOTIDE SEQUENCE [LARGE SCALE GENOMIC DNA]</scope>
    <source>
        <strain>ATCC 8585 / CBS 2359 / DSM 70799 / NBRC 1267 / NRRL Y-1140 / WM37</strain>
    </source>
</reference>
<dbReference type="EC" id="2.3.1.48" evidence="2"/>
<dbReference type="EC" id="2.3.1.-" evidence="2"/>
<dbReference type="EMBL" id="CR382121">
    <property type="protein sequence ID" value="CAH02813.1"/>
    <property type="molecule type" value="Genomic_DNA"/>
</dbReference>
<dbReference type="RefSeq" id="XP_451225.1">
    <property type="nucleotide sequence ID" value="XM_451225.1"/>
</dbReference>
<dbReference type="SMR" id="Q6CXW4"/>
<dbReference type="FunCoup" id="Q6CXW4">
    <property type="interactions" value="565"/>
</dbReference>
<dbReference type="STRING" id="284590.Q6CXW4"/>
<dbReference type="PaxDb" id="284590-Q6CXW4"/>
<dbReference type="KEGG" id="kla:KLLA0_A05115g"/>
<dbReference type="eggNOG" id="KOG1472">
    <property type="taxonomic scope" value="Eukaryota"/>
</dbReference>
<dbReference type="HOGENOM" id="CLU_015741_5_0_1"/>
<dbReference type="InParanoid" id="Q6CXW4"/>
<dbReference type="OMA" id="HQPPKEW"/>
<dbReference type="Proteomes" id="UP000000598">
    <property type="component" value="Chromosome A"/>
</dbReference>
<dbReference type="GO" id="GO:0000123">
    <property type="term" value="C:histone acetyltransferase complex"/>
    <property type="evidence" value="ECO:0007669"/>
    <property type="project" value="TreeGrafter"/>
</dbReference>
<dbReference type="GO" id="GO:0005634">
    <property type="term" value="C:nucleus"/>
    <property type="evidence" value="ECO:0007669"/>
    <property type="project" value="UniProtKB-SubCell"/>
</dbReference>
<dbReference type="GO" id="GO:0010484">
    <property type="term" value="F:histone H3 acetyltransferase activity"/>
    <property type="evidence" value="ECO:0007669"/>
    <property type="project" value="TreeGrafter"/>
</dbReference>
<dbReference type="GO" id="GO:0140064">
    <property type="term" value="F:peptide crotonyltransferase activity"/>
    <property type="evidence" value="ECO:0007669"/>
    <property type="project" value="RHEA"/>
</dbReference>
<dbReference type="GO" id="GO:0045944">
    <property type="term" value="P:positive regulation of transcription by RNA polymerase II"/>
    <property type="evidence" value="ECO:0007669"/>
    <property type="project" value="TreeGrafter"/>
</dbReference>
<dbReference type="CDD" id="cd05509">
    <property type="entry name" value="Bromo_gcn5_like"/>
    <property type="match status" value="1"/>
</dbReference>
<dbReference type="CDD" id="cd04301">
    <property type="entry name" value="NAT_SF"/>
    <property type="match status" value="1"/>
</dbReference>
<dbReference type="FunFam" id="1.20.920.10:FF:000046">
    <property type="entry name" value="Histone acetyltransferase GCN5"/>
    <property type="match status" value="1"/>
</dbReference>
<dbReference type="FunFam" id="3.40.630.30:FF:000004">
    <property type="entry name" value="Histone acetyltransferase KAT2A"/>
    <property type="match status" value="1"/>
</dbReference>
<dbReference type="Gene3D" id="3.40.630.30">
    <property type="match status" value="1"/>
</dbReference>
<dbReference type="Gene3D" id="1.20.920.10">
    <property type="entry name" value="Bromodomain-like"/>
    <property type="match status" value="1"/>
</dbReference>
<dbReference type="InterPro" id="IPR016181">
    <property type="entry name" value="Acyl_CoA_acyltransferase"/>
</dbReference>
<dbReference type="InterPro" id="IPR001487">
    <property type="entry name" value="Bromodomain"/>
</dbReference>
<dbReference type="InterPro" id="IPR036427">
    <property type="entry name" value="Bromodomain-like_sf"/>
</dbReference>
<dbReference type="InterPro" id="IPR018359">
    <property type="entry name" value="Bromodomain_CS"/>
</dbReference>
<dbReference type="InterPro" id="IPR037800">
    <property type="entry name" value="GCN5"/>
</dbReference>
<dbReference type="InterPro" id="IPR000182">
    <property type="entry name" value="GNAT_dom"/>
</dbReference>
<dbReference type="PANTHER" id="PTHR45750">
    <property type="entry name" value="GH11602P"/>
    <property type="match status" value="1"/>
</dbReference>
<dbReference type="PANTHER" id="PTHR45750:SF3">
    <property type="entry name" value="HISTONE ACETYLTRANSFERASE"/>
    <property type="match status" value="1"/>
</dbReference>
<dbReference type="Pfam" id="PF00583">
    <property type="entry name" value="Acetyltransf_1"/>
    <property type="match status" value="1"/>
</dbReference>
<dbReference type="Pfam" id="PF00439">
    <property type="entry name" value="Bromodomain"/>
    <property type="match status" value="1"/>
</dbReference>
<dbReference type="PRINTS" id="PR00503">
    <property type="entry name" value="BROMODOMAIN"/>
</dbReference>
<dbReference type="SMART" id="SM00297">
    <property type="entry name" value="BROMO"/>
    <property type="match status" value="1"/>
</dbReference>
<dbReference type="SUPFAM" id="SSF55729">
    <property type="entry name" value="Acyl-CoA N-acyltransferases (Nat)"/>
    <property type="match status" value="1"/>
</dbReference>
<dbReference type="SUPFAM" id="SSF47370">
    <property type="entry name" value="Bromodomain"/>
    <property type="match status" value="1"/>
</dbReference>
<dbReference type="PROSITE" id="PS00633">
    <property type="entry name" value="BROMODOMAIN_1"/>
    <property type="match status" value="1"/>
</dbReference>
<dbReference type="PROSITE" id="PS50014">
    <property type="entry name" value="BROMODOMAIN_2"/>
    <property type="match status" value="1"/>
</dbReference>
<dbReference type="PROSITE" id="PS51186">
    <property type="entry name" value="GNAT"/>
    <property type="match status" value="1"/>
</dbReference>
<comment type="function">
    <text evidence="2">Histone acetyltransferase that acetylates histone H2B to form H2BK11ac and H2BK16ac, histone H3 to form H3K14ac, with a lower preference histone H4 to form H4K8ac and H4K16ac, and contributes to H2A.Z acetylation. Acetylation of histones gives a specific tag for epigenetic transcription activation. In addition to histone acetyltransferase, can use different acyl-CoA substrates, such as (2E)-butenoyl-CoA (crotonyl-CoA) and is able to mediate histone crotonylation.</text>
</comment>
<comment type="catalytic activity">
    <reaction evidence="2">
        <text>L-lysyl-[protein] + acetyl-CoA = N(6)-acetyl-L-lysyl-[protein] + CoA + H(+)</text>
        <dbReference type="Rhea" id="RHEA:45948"/>
        <dbReference type="Rhea" id="RHEA-COMP:9752"/>
        <dbReference type="Rhea" id="RHEA-COMP:10731"/>
        <dbReference type="ChEBI" id="CHEBI:15378"/>
        <dbReference type="ChEBI" id="CHEBI:29969"/>
        <dbReference type="ChEBI" id="CHEBI:57287"/>
        <dbReference type="ChEBI" id="CHEBI:57288"/>
        <dbReference type="ChEBI" id="CHEBI:61930"/>
        <dbReference type="EC" id="2.3.1.48"/>
    </reaction>
</comment>
<comment type="catalytic activity">
    <reaction evidence="2">
        <text>(2E)-butenoyl-CoA + L-lysyl-[protein] = N(6)-(2E)-butenoyl-L-lysyl-[protein] + CoA + H(+)</text>
        <dbReference type="Rhea" id="RHEA:53908"/>
        <dbReference type="Rhea" id="RHEA-COMP:9752"/>
        <dbReference type="Rhea" id="RHEA-COMP:13707"/>
        <dbReference type="ChEBI" id="CHEBI:15378"/>
        <dbReference type="ChEBI" id="CHEBI:29969"/>
        <dbReference type="ChEBI" id="CHEBI:57287"/>
        <dbReference type="ChEBI" id="CHEBI:57332"/>
        <dbReference type="ChEBI" id="CHEBI:137954"/>
    </reaction>
</comment>
<comment type="subcellular location">
    <subcellularLocation>
        <location evidence="7">Nucleus</location>
    </subcellularLocation>
</comment>
<comment type="similarity">
    <text evidence="7">Belongs to the acetyltransferase family. GCN5 subfamily.</text>
</comment>
<name>GCN5_KLULA</name>
<protein>
    <recommendedName>
        <fullName evidence="7">Histone acetyltransferase GCN5</fullName>
        <ecNumber evidence="2">2.3.1.48</ecNumber>
    </recommendedName>
    <alternativeName>
        <fullName evidence="7">Histone crotonyltransferase GCN5</fullName>
        <ecNumber evidence="2">2.3.1.-</ecNumber>
    </alternativeName>
</protein>
<organism>
    <name type="scientific">Kluyveromyces lactis (strain ATCC 8585 / CBS 2359 / DSM 70799 / NBRC 1267 / NRRL Y-1140 / WM37)</name>
    <name type="common">Yeast</name>
    <name type="synonym">Candida sphaerica</name>
    <dbReference type="NCBI Taxonomy" id="284590"/>
    <lineage>
        <taxon>Eukaryota</taxon>
        <taxon>Fungi</taxon>
        <taxon>Dikarya</taxon>
        <taxon>Ascomycota</taxon>
        <taxon>Saccharomycotina</taxon>
        <taxon>Saccharomycetes</taxon>
        <taxon>Saccharomycetales</taxon>
        <taxon>Saccharomycetaceae</taxon>
        <taxon>Kluyveromyces</taxon>
    </lineage>
</organism>
<gene>
    <name type="primary">GCN5</name>
    <name type="ordered locus">KLLA0A05115g</name>
</gene>
<sequence>MPPKRRHHGAGRVQNKRGKVDTVKEEIKPKDEPVETEIDGGSAVDEDVTDDLEHKTSKEDQKEDQKEEDGPIDAQNGTSETKVAGESVKTVEDKIESVTTNEEVVESPVNDYNASSTTTKAEEKQLEEEANEKTDTSPIVENEVVDEEAGTTKFDFDGQEYSYKDRPSVIEEKEGKIEFRVVNNDNSKENMMVLTGLKNIFQKQLPKMPKEYIARLVYDRSHLSMAVVRKPLTVVGGITYRPFDKREFAEIVFCAISSTEQVRGYGAHLMNHLKDYVRATSPIKYFLTYADNYAIGYFKKQGFTKEITLDKNVWMGYIKDYEGGTLMQCSMLPRIRYLDAAKILLLQEAAIRRKIRSISQSHIVRPGLKQFLDLDNIKPIDPMTIPGLKEAGWTPEMDELAQRPKRGPHYAAMQNLLTELQNHAAAWPFLQPVNKEEVPDYYEFIKEPMDLSSMEMKLNGNRYEKMENFIYDARLIFNNCRAYNGENTSYFKYANRLEKFFNSKVKEIPEYSHLVD</sequence>
<feature type="chain" id="PRO_0000211198" description="Histone acetyltransferase GCN5">
    <location>
        <begin position="1"/>
        <end position="516"/>
    </location>
</feature>
<feature type="domain" description="N-acetyltransferase" evidence="5">
    <location>
        <begin position="177"/>
        <end position="332"/>
    </location>
</feature>
<feature type="domain" description="Bromo" evidence="4">
    <location>
        <begin position="404"/>
        <end position="508"/>
    </location>
</feature>
<feature type="region of interest" description="Disordered" evidence="6">
    <location>
        <begin position="1"/>
        <end position="136"/>
    </location>
</feature>
<feature type="compositionally biased region" description="Basic residues" evidence="6">
    <location>
        <begin position="1"/>
        <end position="17"/>
    </location>
</feature>
<feature type="compositionally biased region" description="Basic and acidic residues" evidence="6">
    <location>
        <begin position="18"/>
        <end position="33"/>
    </location>
</feature>
<feature type="compositionally biased region" description="Acidic residues" evidence="6">
    <location>
        <begin position="34"/>
        <end position="50"/>
    </location>
</feature>
<feature type="compositionally biased region" description="Basic and acidic residues" evidence="6">
    <location>
        <begin position="51"/>
        <end position="69"/>
    </location>
</feature>
<feature type="compositionally biased region" description="Low complexity" evidence="6">
    <location>
        <begin position="97"/>
        <end position="110"/>
    </location>
</feature>
<feature type="active site" description="Proton donor/acceptor" evidence="3">
    <location>
        <position position="250"/>
    </location>
</feature>
<feature type="binding site" evidence="3">
    <location>
        <begin position="254"/>
        <end position="256"/>
    </location>
    <ligand>
        <name>acetyl-CoA</name>
        <dbReference type="ChEBI" id="CHEBI:57288"/>
    </ligand>
</feature>
<feature type="binding site" evidence="3">
    <location>
        <begin position="261"/>
        <end position="267"/>
    </location>
    <ligand>
        <name>acetyl-CoA</name>
        <dbReference type="ChEBI" id="CHEBI:57288"/>
    </ligand>
</feature>
<feature type="binding site" evidence="3">
    <location>
        <begin position="293"/>
        <end position="296"/>
    </location>
    <ligand>
        <name>acetyl-CoA</name>
        <dbReference type="ChEBI" id="CHEBI:57288"/>
    </ligand>
</feature>
<feature type="site" description="Important for catalytic activity" evidence="1">
    <location>
        <position position="250"/>
    </location>
</feature>
<proteinExistence type="inferred from homology"/>
<evidence type="ECO:0000250" key="1"/>
<evidence type="ECO:0000250" key="2">
    <source>
        <dbReference type="UniProtKB" id="Q03330"/>
    </source>
</evidence>
<evidence type="ECO:0000250" key="3">
    <source>
        <dbReference type="UniProtKB" id="Q92830"/>
    </source>
</evidence>
<evidence type="ECO:0000255" key="4">
    <source>
        <dbReference type="PROSITE-ProRule" id="PRU00035"/>
    </source>
</evidence>
<evidence type="ECO:0000255" key="5">
    <source>
        <dbReference type="PROSITE-ProRule" id="PRU00532"/>
    </source>
</evidence>
<evidence type="ECO:0000256" key="6">
    <source>
        <dbReference type="SAM" id="MobiDB-lite"/>
    </source>
</evidence>
<evidence type="ECO:0000305" key="7"/>